<keyword id="KW-0687">Ribonucleoprotein</keyword>
<keyword id="KW-0689">Ribosomal protein</keyword>
<keyword id="KW-0694">RNA-binding</keyword>
<keyword id="KW-0699">rRNA-binding</keyword>
<proteinExistence type="inferred from homology"/>
<organism>
    <name type="scientific">Leptospira interrogans serogroup Icterohaemorrhagiae serovar copenhageni (strain Fiocruz L1-130)</name>
    <dbReference type="NCBI Taxonomy" id="267671"/>
    <lineage>
        <taxon>Bacteria</taxon>
        <taxon>Pseudomonadati</taxon>
        <taxon>Spirochaetota</taxon>
        <taxon>Spirochaetia</taxon>
        <taxon>Leptospirales</taxon>
        <taxon>Leptospiraceae</taxon>
        <taxon>Leptospira</taxon>
    </lineage>
</organism>
<name>RS5_LEPIC</name>
<feature type="chain" id="PRO_0000131536" description="Small ribosomal subunit protein uS5">
    <location>
        <begin position="1"/>
        <end position="168"/>
    </location>
</feature>
<feature type="domain" description="S5 DRBM" evidence="1">
    <location>
        <begin position="11"/>
        <end position="74"/>
    </location>
</feature>
<comment type="function">
    <text evidence="1">With S4 and S12 plays an important role in translational accuracy.</text>
</comment>
<comment type="function">
    <text evidence="1">Located at the back of the 30S subunit body where it stabilizes the conformation of the head with respect to the body.</text>
</comment>
<comment type="subunit">
    <text evidence="1">Part of the 30S ribosomal subunit. Contacts proteins S4 and S8.</text>
</comment>
<comment type="domain">
    <text>The N-terminal domain interacts with the head of the 30S subunit; the C-terminal domain interacts with the body and contacts protein S4. The interaction surface between S4 and S5 is involved in control of translational fidelity.</text>
</comment>
<comment type="similarity">
    <text evidence="1">Belongs to the universal ribosomal protein uS5 family.</text>
</comment>
<reference key="1">
    <citation type="journal article" date="2004" name="J. Bacteriol.">
        <title>Comparative genomics of two Leptospira interrogans serovars reveals novel insights into physiology and pathogenesis.</title>
        <authorList>
            <person name="Nascimento A.L.T.O."/>
            <person name="Ko A.I."/>
            <person name="Martins E.A.L."/>
            <person name="Monteiro-Vitorello C.B."/>
            <person name="Ho P.L."/>
            <person name="Haake D.A."/>
            <person name="Verjovski-Almeida S."/>
            <person name="Hartskeerl R.A."/>
            <person name="Marques M.V."/>
            <person name="Oliveira M.C."/>
            <person name="Menck C.F.M."/>
            <person name="Leite L.C.C."/>
            <person name="Carrer H."/>
            <person name="Coutinho L.L."/>
            <person name="Degrave W.M."/>
            <person name="Dellagostin O.A."/>
            <person name="El-Dorry H."/>
            <person name="Ferro E.S."/>
            <person name="Ferro M.I.T."/>
            <person name="Furlan L.R."/>
            <person name="Gamberini M."/>
            <person name="Giglioti E.A."/>
            <person name="Goes-Neto A."/>
            <person name="Goldman G.H."/>
            <person name="Goldman M.H.S."/>
            <person name="Harakava R."/>
            <person name="Jeronimo S.M.B."/>
            <person name="Junqueira-de-Azevedo I.L.M."/>
            <person name="Kimura E.T."/>
            <person name="Kuramae E.E."/>
            <person name="Lemos E.G.M."/>
            <person name="Lemos M.V.F."/>
            <person name="Marino C.L."/>
            <person name="Nunes L.R."/>
            <person name="de Oliveira R.C."/>
            <person name="Pereira G.G."/>
            <person name="Reis M.S."/>
            <person name="Schriefer A."/>
            <person name="Siqueira W.J."/>
            <person name="Sommer P."/>
            <person name="Tsai S.M."/>
            <person name="Simpson A.J.G."/>
            <person name="Ferro J.A."/>
            <person name="Camargo L.E.A."/>
            <person name="Kitajima J.P."/>
            <person name="Setubal J.C."/>
            <person name="Van Sluys M.A."/>
        </authorList>
    </citation>
    <scope>NUCLEOTIDE SEQUENCE [LARGE SCALE GENOMIC DNA]</scope>
    <source>
        <strain>Fiocruz L1-130</strain>
    </source>
</reference>
<sequence length="168" mass="18124">MAYQDEESKEYSEKVVKIDRVAKVVKGGRRFSFNALSVVGDQRGKVGIGFGKANEVPDAIRKSIESAKKHLVKINFKGHTIPHEVIGKFKSARVILKPSTAGTGIIAGASVRSIVEKAGIQDVLTKSWGSSNPVNIVKATLDALEQLETPILAAKKRGISLNKLFGKD</sequence>
<dbReference type="EMBL" id="AE016823">
    <property type="protein sequence ID" value="AAS71409.1"/>
    <property type="molecule type" value="Genomic_DNA"/>
</dbReference>
<dbReference type="RefSeq" id="WP_000331210.1">
    <property type="nucleotide sequence ID" value="NC_005823.1"/>
</dbReference>
<dbReference type="SMR" id="Q72NH8"/>
<dbReference type="GeneID" id="61142730"/>
<dbReference type="KEGG" id="lic:LIC_12856"/>
<dbReference type="HOGENOM" id="CLU_065898_2_2_12"/>
<dbReference type="Proteomes" id="UP000007037">
    <property type="component" value="Chromosome I"/>
</dbReference>
<dbReference type="GO" id="GO:0015935">
    <property type="term" value="C:small ribosomal subunit"/>
    <property type="evidence" value="ECO:0007669"/>
    <property type="project" value="InterPro"/>
</dbReference>
<dbReference type="GO" id="GO:0019843">
    <property type="term" value="F:rRNA binding"/>
    <property type="evidence" value="ECO:0007669"/>
    <property type="project" value="UniProtKB-UniRule"/>
</dbReference>
<dbReference type="GO" id="GO:0003735">
    <property type="term" value="F:structural constituent of ribosome"/>
    <property type="evidence" value="ECO:0007669"/>
    <property type="project" value="InterPro"/>
</dbReference>
<dbReference type="GO" id="GO:0006412">
    <property type="term" value="P:translation"/>
    <property type="evidence" value="ECO:0007669"/>
    <property type="project" value="UniProtKB-UniRule"/>
</dbReference>
<dbReference type="FunFam" id="3.30.160.20:FF:000001">
    <property type="entry name" value="30S ribosomal protein S5"/>
    <property type="match status" value="1"/>
</dbReference>
<dbReference type="FunFam" id="3.30.230.10:FF:000002">
    <property type="entry name" value="30S ribosomal protein S5"/>
    <property type="match status" value="1"/>
</dbReference>
<dbReference type="Gene3D" id="3.30.160.20">
    <property type="match status" value="1"/>
</dbReference>
<dbReference type="Gene3D" id="3.30.230.10">
    <property type="match status" value="1"/>
</dbReference>
<dbReference type="HAMAP" id="MF_01307_B">
    <property type="entry name" value="Ribosomal_uS5_B"/>
    <property type="match status" value="1"/>
</dbReference>
<dbReference type="InterPro" id="IPR020568">
    <property type="entry name" value="Ribosomal_Su5_D2-typ_SF"/>
</dbReference>
<dbReference type="InterPro" id="IPR000851">
    <property type="entry name" value="Ribosomal_uS5"/>
</dbReference>
<dbReference type="InterPro" id="IPR005712">
    <property type="entry name" value="Ribosomal_uS5_bac-type"/>
</dbReference>
<dbReference type="InterPro" id="IPR005324">
    <property type="entry name" value="Ribosomal_uS5_C"/>
</dbReference>
<dbReference type="InterPro" id="IPR013810">
    <property type="entry name" value="Ribosomal_uS5_N"/>
</dbReference>
<dbReference type="InterPro" id="IPR018192">
    <property type="entry name" value="Ribosomal_uS5_N_CS"/>
</dbReference>
<dbReference type="InterPro" id="IPR014721">
    <property type="entry name" value="Ribsml_uS5_D2-typ_fold_subgr"/>
</dbReference>
<dbReference type="NCBIfam" id="TIGR01021">
    <property type="entry name" value="rpsE_bact"/>
    <property type="match status" value="1"/>
</dbReference>
<dbReference type="PANTHER" id="PTHR48277">
    <property type="entry name" value="MITOCHONDRIAL RIBOSOMAL PROTEIN S5"/>
    <property type="match status" value="1"/>
</dbReference>
<dbReference type="PANTHER" id="PTHR48277:SF1">
    <property type="entry name" value="MITOCHONDRIAL RIBOSOMAL PROTEIN S5"/>
    <property type="match status" value="1"/>
</dbReference>
<dbReference type="Pfam" id="PF00333">
    <property type="entry name" value="Ribosomal_S5"/>
    <property type="match status" value="1"/>
</dbReference>
<dbReference type="Pfam" id="PF03719">
    <property type="entry name" value="Ribosomal_S5_C"/>
    <property type="match status" value="1"/>
</dbReference>
<dbReference type="SUPFAM" id="SSF54768">
    <property type="entry name" value="dsRNA-binding domain-like"/>
    <property type="match status" value="1"/>
</dbReference>
<dbReference type="SUPFAM" id="SSF54211">
    <property type="entry name" value="Ribosomal protein S5 domain 2-like"/>
    <property type="match status" value="1"/>
</dbReference>
<dbReference type="PROSITE" id="PS00585">
    <property type="entry name" value="RIBOSOMAL_S5"/>
    <property type="match status" value="1"/>
</dbReference>
<dbReference type="PROSITE" id="PS50881">
    <property type="entry name" value="S5_DSRBD"/>
    <property type="match status" value="1"/>
</dbReference>
<accession>Q72NH8</accession>
<gene>
    <name evidence="1" type="primary">rpsE</name>
    <name type="ordered locus">LIC_12856</name>
</gene>
<protein>
    <recommendedName>
        <fullName evidence="1">Small ribosomal subunit protein uS5</fullName>
    </recommendedName>
    <alternativeName>
        <fullName evidence="2">30S ribosomal protein S5</fullName>
    </alternativeName>
</protein>
<evidence type="ECO:0000255" key="1">
    <source>
        <dbReference type="HAMAP-Rule" id="MF_01307"/>
    </source>
</evidence>
<evidence type="ECO:0000305" key="2"/>